<accession>Q9XHZ3</accession>
<accession>E0ZS50</accession>
<feature type="chain" id="PRO_0000424252" description="Urease accessory protein F">
    <location>
        <begin position="1"/>
        <end position="240"/>
    </location>
</feature>
<evidence type="ECO:0000250" key="1"/>
<evidence type="ECO:0000269" key="2">
    <source>
    </source>
</evidence>
<evidence type="ECO:0000305" key="3"/>
<proteinExistence type="evidence at transcript level"/>
<reference key="1">
    <citation type="journal article" date="2000" name="Nature">
        <title>Sequence and analysis of chromosome 1 of the plant Arabidopsis thaliana.</title>
        <authorList>
            <person name="Theologis A."/>
            <person name="Ecker J.R."/>
            <person name="Palm C.J."/>
            <person name="Federspiel N.A."/>
            <person name="Kaul S."/>
            <person name="White O."/>
            <person name="Alonso J."/>
            <person name="Altafi H."/>
            <person name="Araujo R."/>
            <person name="Bowman C.L."/>
            <person name="Brooks S.Y."/>
            <person name="Buehler E."/>
            <person name="Chan A."/>
            <person name="Chao Q."/>
            <person name="Chen H."/>
            <person name="Cheuk R.F."/>
            <person name="Chin C.W."/>
            <person name="Chung M.K."/>
            <person name="Conn L."/>
            <person name="Conway A.B."/>
            <person name="Conway A.R."/>
            <person name="Creasy T.H."/>
            <person name="Dewar K."/>
            <person name="Dunn P."/>
            <person name="Etgu P."/>
            <person name="Feldblyum T.V."/>
            <person name="Feng J.-D."/>
            <person name="Fong B."/>
            <person name="Fujii C.Y."/>
            <person name="Gill J.E."/>
            <person name="Goldsmith A.D."/>
            <person name="Haas B."/>
            <person name="Hansen N.F."/>
            <person name="Hughes B."/>
            <person name="Huizar L."/>
            <person name="Hunter J.L."/>
            <person name="Jenkins J."/>
            <person name="Johnson-Hopson C."/>
            <person name="Khan S."/>
            <person name="Khaykin E."/>
            <person name="Kim C.J."/>
            <person name="Koo H.L."/>
            <person name="Kremenetskaia I."/>
            <person name="Kurtz D.B."/>
            <person name="Kwan A."/>
            <person name="Lam B."/>
            <person name="Langin-Hooper S."/>
            <person name="Lee A."/>
            <person name="Lee J.M."/>
            <person name="Lenz C.A."/>
            <person name="Li J.H."/>
            <person name="Li Y.-P."/>
            <person name="Lin X."/>
            <person name="Liu S.X."/>
            <person name="Liu Z.A."/>
            <person name="Luros J.S."/>
            <person name="Maiti R."/>
            <person name="Marziali A."/>
            <person name="Militscher J."/>
            <person name="Miranda M."/>
            <person name="Nguyen M."/>
            <person name="Nierman W.C."/>
            <person name="Osborne B.I."/>
            <person name="Pai G."/>
            <person name="Peterson J."/>
            <person name="Pham P.K."/>
            <person name="Rizzo M."/>
            <person name="Rooney T."/>
            <person name="Rowley D."/>
            <person name="Sakano H."/>
            <person name="Salzberg S.L."/>
            <person name="Schwartz J.R."/>
            <person name="Shinn P."/>
            <person name="Southwick A.M."/>
            <person name="Sun H."/>
            <person name="Tallon L.J."/>
            <person name="Tambunga G."/>
            <person name="Toriumi M.J."/>
            <person name="Town C.D."/>
            <person name="Utterback T."/>
            <person name="Van Aken S."/>
            <person name="Vaysberg M."/>
            <person name="Vysotskaia V.S."/>
            <person name="Walker M."/>
            <person name="Wu D."/>
            <person name="Yu G."/>
            <person name="Fraser C.M."/>
            <person name="Venter J.C."/>
            <person name="Davis R.W."/>
        </authorList>
    </citation>
    <scope>NUCLEOTIDE SEQUENCE [LARGE SCALE GENOMIC DNA]</scope>
    <source>
        <strain>cv. Columbia</strain>
    </source>
</reference>
<reference key="2">
    <citation type="journal article" date="2017" name="Plant J.">
        <title>Araport11: a complete reannotation of the Arabidopsis thaliana reference genome.</title>
        <authorList>
            <person name="Cheng C.Y."/>
            <person name="Krishnakumar V."/>
            <person name="Chan A.P."/>
            <person name="Thibaud-Nissen F."/>
            <person name="Schobel S."/>
            <person name="Town C.D."/>
        </authorList>
    </citation>
    <scope>GENOME REANNOTATION</scope>
    <source>
        <strain>cv. Columbia</strain>
    </source>
</reference>
<reference key="3">
    <citation type="submission" date="2004-05" db="EMBL/GenBank/DDBJ databases">
        <title>Arabidopsis ORF clones.</title>
        <authorList>
            <person name="Shinn P."/>
            <person name="Chen H."/>
            <person name="Cheuk R.F."/>
            <person name="Kim C.J."/>
            <person name="Carninci P."/>
            <person name="Hayashizaki Y."/>
            <person name="Ishida J."/>
            <person name="Kamiya A."/>
            <person name="Kawai J."/>
            <person name="Narusaka M."/>
            <person name="Sakurai T."/>
            <person name="Satou M."/>
            <person name="Seki M."/>
            <person name="Shinozaki K."/>
            <person name="Ecker J.R."/>
        </authorList>
    </citation>
    <scope>NUCLEOTIDE SEQUENCE [LARGE SCALE MRNA]</scope>
    <source>
        <strain>cv. Columbia</strain>
    </source>
</reference>
<reference key="4">
    <citation type="submission" date="2004-09" db="EMBL/GenBank/DDBJ databases">
        <title>Large-scale analysis of RIKEN Arabidopsis full-length (RAFL) cDNAs.</title>
        <authorList>
            <person name="Totoki Y."/>
            <person name="Seki M."/>
            <person name="Ishida J."/>
            <person name="Nakajima M."/>
            <person name="Enju A."/>
            <person name="Kamiya A."/>
            <person name="Narusaka M."/>
            <person name="Shin-i T."/>
            <person name="Nakagawa M."/>
            <person name="Sakamoto N."/>
            <person name="Oishi K."/>
            <person name="Kohara Y."/>
            <person name="Kobayashi M."/>
            <person name="Toyoda A."/>
            <person name="Sakaki Y."/>
            <person name="Sakurai T."/>
            <person name="Iida K."/>
            <person name="Akiyama K."/>
            <person name="Satou M."/>
            <person name="Toyoda T."/>
            <person name="Konagaya A."/>
            <person name="Carninci P."/>
            <person name="Kawai J."/>
            <person name="Hayashizaki Y."/>
            <person name="Shinozaki K."/>
        </authorList>
    </citation>
    <scope>NUCLEOTIDE SEQUENCE [LARGE SCALE MRNA]</scope>
    <source>
        <strain>cv. Columbia</strain>
    </source>
</reference>
<reference key="5">
    <citation type="journal article" date="2010" name="Plant Physiol.">
        <title>Identification and characterization of proteins involved in rice urea and arginine catabolism.</title>
        <authorList>
            <person name="Cao F.Q."/>
            <person name="Werner A.K."/>
            <person name="Dahncke K."/>
            <person name="Romeis T."/>
            <person name="Liu L.H."/>
            <person name="Witte C.P."/>
        </authorList>
    </citation>
    <scope>NUCLEOTIDE SEQUENCE [MRNA] OF 1-86</scope>
    <source>
        <strain>cv. Columbia</strain>
    </source>
</reference>
<reference key="6">
    <citation type="journal article" date="2005" name="Plant Physiol.">
        <title>Identification of three urease accessory proteins that are required for urease activation in Arabidopsis.</title>
        <authorList>
            <person name="Witte C.P."/>
            <person name="Rosso M.G."/>
            <person name="Romeis T."/>
        </authorList>
    </citation>
    <scope>FUNCTION</scope>
    <scope>DISRUPTION PHENOTYPE</scope>
</reference>
<dbReference type="EMBL" id="AC007727">
    <property type="protein sequence ID" value="AAD41438.1"/>
    <property type="molecule type" value="Genomic_DNA"/>
</dbReference>
<dbReference type="EMBL" id="AC013482">
    <property type="protein sequence ID" value="AAF16528.1"/>
    <property type="molecule type" value="Genomic_DNA"/>
</dbReference>
<dbReference type="EMBL" id="CP002684">
    <property type="protein sequence ID" value="AEE30161.1"/>
    <property type="molecule type" value="Genomic_DNA"/>
</dbReference>
<dbReference type="EMBL" id="CP002684">
    <property type="protein sequence ID" value="ANM60497.1"/>
    <property type="molecule type" value="Genomic_DNA"/>
</dbReference>
<dbReference type="EMBL" id="BT012628">
    <property type="protein sequence ID" value="AAT06447.1"/>
    <property type="molecule type" value="mRNA"/>
</dbReference>
<dbReference type="EMBL" id="AK175196">
    <property type="protein sequence ID" value="BAD42959.1"/>
    <property type="molecule type" value="mRNA"/>
</dbReference>
<dbReference type="EMBL" id="HM369062">
    <property type="protein sequence ID" value="ADK74001.1"/>
    <property type="molecule type" value="mRNA"/>
</dbReference>
<dbReference type="RefSeq" id="NP_001322780.1">
    <property type="nucleotide sequence ID" value="NM_001332530.1"/>
</dbReference>
<dbReference type="RefSeq" id="NP_173602.1">
    <property type="nucleotide sequence ID" value="NM_102032.4"/>
</dbReference>
<dbReference type="SMR" id="Q9XHZ3"/>
<dbReference type="BioGRID" id="24025">
    <property type="interactions" value="3"/>
</dbReference>
<dbReference type="ComplexPortal" id="CPX-1296">
    <property type="entry name" value="Urease activation complex"/>
</dbReference>
<dbReference type="FunCoup" id="Q9XHZ3">
    <property type="interactions" value="63"/>
</dbReference>
<dbReference type="IntAct" id="Q9XHZ3">
    <property type="interactions" value="3"/>
</dbReference>
<dbReference type="STRING" id="3702.Q9XHZ3"/>
<dbReference type="PaxDb" id="3702-AT1G21840.1"/>
<dbReference type="ProteomicsDB" id="228628"/>
<dbReference type="DNASU" id="838786"/>
<dbReference type="EnsemblPlants" id="AT1G21840.1">
    <property type="protein sequence ID" value="AT1G21840.1"/>
    <property type="gene ID" value="AT1G21840"/>
</dbReference>
<dbReference type="EnsemblPlants" id="AT1G21840.2">
    <property type="protein sequence ID" value="AT1G21840.2"/>
    <property type="gene ID" value="AT1G21840"/>
</dbReference>
<dbReference type="GeneID" id="838786"/>
<dbReference type="Gramene" id="AT1G21840.1">
    <property type="protein sequence ID" value="AT1G21840.1"/>
    <property type="gene ID" value="AT1G21840"/>
</dbReference>
<dbReference type="Gramene" id="AT1G21840.2">
    <property type="protein sequence ID" value="AT1G21840.2"/>
    <property type="gene ID" value="AT1G21840"/>
</dbReference>
<dbReference type="KEGG" id="ath:AT1G21840"/>
<dbReference type="Araport" id="AT1G21840"/>
<dbReference type="TAIR" id="AT1G21840">
    <property type="gene designation" value="UREF"/>
</dbReference>
<dbReference type="eggNOG" id="ENOG502REVQ">
    <property type="taxonomic scope" value="Eukaryota"/>
</dbReference>
<dbReference type="HOGENOM" id="CLU_049215_1_0_1"/>
<dbReference type="InParanoid" id="Q9XHZ3"/>
<dbReference type="OMA" id="WVGRHEK"/>
<dbReference type="PhylomeDB" id="Q9XHZ3"/>
<dbReference type="PRO" id="PR:Q9XHZ3"/>
<dbReference type="Proteomes" id="UP000006548">
    <property type="component" value="Chromosome 1"/>
</dbReference>
<dbReference type="ExpressionAtlas" id="Q9XHZ3">
    <property type="expression patterns" value="baseline and differential"/>
</dbReference>
<dbReference type="GO" id="GO:0150006">
    <property type="term" value="C:urease activator complex"/>
    <property type="evidence" value="ECO:0000353"/>
    <property type="project" value="ComplexPortal"/>
</dbReference>
<dbReference type="GO" id="GO:0016151">
    <property type="term" value="F:nickel cation binding"/>
    <property type="evidence" value="ECO:0007669"/>
    <property type="project" value="InterPro"/>
</dbReference>
<dbReference type="GO" id="GO:0051604">
    <property type="term" value="P:protein maturation"/>
    <property type="evidence" value="ECO:0000315"/>
    <property type="project" value="UniProtKB"/>
</dbReference>
<dbReference type="GO" id="GO:0043419">
    <property type="term" value="P:urea catabolic process"/>
    <property type="evidence" value="ECO:0000314"/>
    <property type="project" value="ComplexPortal"/>
</dbReference>
<dbReference type="Gene3D" id="1.10.4190.10">
    <property type="entry name" value="Urease accessory protein UreF"/>
    <property type="match status" value="1"/>
</dbReference>
<dbReference type="InterPro" id="IPR002639">
    <property type="entry name" value="UreF"/>
</dbReference>
<dbReference type="InterPro" id="IPR038277">
    <property type="entry name" value="UreF_sf"/>
</dbReference>
<dbReference type="PANTHER" id="PTHR33620">
    <property type="entry name" value="UREASE ACCESSORY PROTEIN F"/>
    <property type="match status" value="1"/>
</dbReference>
<dbReference type="PANTHER" id="PTHR33620:SF1">
    <property type="entry name" value="UREASE ACCESSORY PROTEIN F"/>
    <property type="match status" value="1"/>
</dbReference>
<dbReference type="Pfam" id="PF01730">
    <property type="entry name" value="UreF"/>
    <property type="match status" value="1"/>
</dbReference>
<dbReference type="PIRSF" id="PIRSF009467">
    <property type="entry name" value="Ureas_acces_UreF"/>
    <property type="match status" value="1"/>
</dbReference>
<comment type="function">
    <text evidence="2">Required for the maturation and activation of urease via the functional incorporation of the urease nickel metallocenter.</text>
</comment>
<comment type="subunit">
    <text evidence="1">URED, UREF and UREG may form a complex that acts as a GTP-hydrolysis-dependent molecular chaperone, activating the urease apoprotein.</text>
</comment>
<comment type="disruption phenotype">
    <text evidence="2">No visible phenotype under normal growth conditions, but mutant plants cannot grow on medium with urea as the sole source of nitrogen.</text>
</comment>
<comment type="similarity">
    <text evidence="3">Belongs to the UreF family.</text>
</comment>
<protein>
    <recommendedName>
        <fullName>Urease accessory protein F</fullName>
        <shortName>AtUREF</shortName>
    </recommendedName>
</protein>
<sequence>MEEDERRDIVMSRASSCMQWSQWQLLDSILPTGGFAHSFGLEAAIQTRLVSSPEDLETHIIHVLDNTASLLLPFVYSALKSPDIETWHKLDGILNATLTNQVSSKASMSQGSALFRIAASVFTEVPNLKMIRDASLGSKNVCFHHAPIFGLVCGLLGMDSETSQRAYLFVTLRDVLSAATRLNIVGPMGASVMQHRIAIVTETVLEKWMNREAGEACQTSPLLDVVQGCHGYLFSRLFCS</sequence>
<gene>
    <name type="primary">UREF</name>
    <name type="ordered locus">At1g21840</name>
    <name type="ORF">F8K7.27</name>
    <name type="ORF">T26F17.5</name>
</gene>
<name>UREF_ARATH</name>
<organism>
    <name type="scientific">Arabidopsis thaliana</name>
    <name type="common">Mouse-ear cress</name>
    <dbReference type="NCBI Taxonomy" id="3702"/>
    <lineage>
        <taxon>Eukaryota</taxon>
        <taxon>Viridiplantae</taxon>
        <taxon>Streptophyta</taxon>
        <taxon>Embryophyta</taxon>
        <taxon>Tracheophyta</taxon>
        <taxon>Spermatophyta</taxon>
        <taxon>Magnoliopsida</taxon>
        <taxon>eudicotyledons</taxon>
        <taxon>Gunneridae</taxon>
        <taxon>Pentapetalae</taxon>
        <taxon>rosids</taxon>
        <taxon>malvids</taxon>
        <taxon>Brassicales</taxon>
        <taxon>Brassicaceae</taxon>
        <taxon>Camelineae</taxon>
        <taxon>Arabidopsis</taxon>
    </lineage>
</organism>
<keyword id="KW-0143">Chaperone</keyword>
<keyword id="KW-0996">Nickel insertion</keyword>
<keyword id="KW-1185">Reference proteome</keyword>